<reference key="1">
    <citation type="journal article" date="2009" name="Environ. Microbiol.">
        <title>The genome of Polaromonas naphthalenivorans strain CJ2, isolated from coal tar-contaminated sediment, reveals physiological and metabolic versatility and evolution through extensive horizontal gene transfer.</title>
        <authorList>
            <person name="Yagi J.M."/>
            <person name="Sims D."/>
            <person name="Brettin T."/>
            <person name="Bruce D."/>
            <person name="Madsen E.L."/>
        </authorList>
    </citation>
    <scope>NUCLEOTIDE SEQUENCE [LARGE SCALE GENOMIC DNA]</scope>
    <source>
        <strain>CJ2</strain>
    </source>
</reference>
<protein>
    <recommendedName>
        <fullName evidence="1">Argininosuccinate lyase</fullName>
        <shortName evidence="1">ASAL</shortName>
        <ecNumber evidence="1">4.3.2.1</ecNumber>
    </recommendedName>
    <alternativeName>
        <fullName evidence="1">Arginosuccinase</fullName>
    </alternativeName>
</protein>
<organism>
    <name type="scientific">Polaromonas naphthalenivorans (strain CJ2)</name>
    <dbReference type="NCBI Taxonomy" id="365044"/>
    <lineage>
        <taxon>Bacteria</taxon>
        <taxon>Pseudomonadati</taxon>
        <taxon>Pseudomonadota</taxon>
        <taxon>Betaproteobacteria</taxon>
        <taxon>Burkholderiales</taxon>
        <taxon>Comamonadaceae</taxon>
        <taxon>Polaromonas</taxon>
    </lineage>
</organism>
<feature type="chain" id="PRO_0000321447" description="Argininosuccinate lyase">
    <location>
        <begin position="1"/>
        <end position="469"/>
    </location>
</feature>
<proteinExistence type="inferred from homology"/>
<dbReference type="EC" id="4.3.2.1" evidence="1"/>
<dbReference type="EMBL" id="CP000529">
    <property type="protein sequence ID" value="ABM38397.1"/>
    <property type="molecule type" value="Genomic_DNA"/>
</dbReference>
<dbReference type="RefSeq" id="WP_011802469.1">
    <property type="nucleotide sequence ID" value="NC_008781.1"/>
</dbReference>
<dbReference type="SMR" id="A1VRW9"/>
<dbReference type="STRING" id="365044.Pnap_3098"/>
<dbReference type="KEGG" id="pna:Pnap_3098"/>
<dbReference type="eggNOG" id="COG0165">
    <property type="taxonomic scope" value="Bacteria"/>
</dbReference>
<dbReference type="HOGENOM" id="CLU_027272_2_3_4"/>
<dbReference type="OrthoDB" id="9769623at2"/>
<dbReference type="UniPathway" id="UPA00068">
    <property type="reaction ID" value="UER00114"/>
</dbReference>
<dbReference type="Proteomes" id="UP000000644">
    <property type="component" value="Chromosome"/>
</dbReference>
<dbReference type="GO" id="GO:0005829">
    <property type="term" value="C:cytosol"/>
    <property type="evidence" value="ECO:0007669"/>
    <property type="project" value="TreeGrafter"/>
</dbReference>
<dbReference type="GO" id="GO:0004056">
    <property type="term" value="F:argininosuccinate lyase activity"/>
    <property type="evidence" value="ECO:0007669"/>
    <property type="project" value="UniProtKB-UniRule"/>
</dbReference>
<dbReference type="GO" id="GO:0042450">
    <property type="term" value="P:arginine biosynthetic process via ornithine"/>
    <property type="evidence" value="ECO:0007669"/>
    <property type="project" value="InterPro"/>
</dbReference>
<dbReference type="GO" id="GO:0006526">
    <property type="term" value="P:L-arginine biosynthetic process"/>
    <property type="evidence" value="ECO:0007669"/>
    <property type="project" value="UniProtKB-UniRule"/>
</dbReference>
<dbReference type="CDD" id="cd01359">
    <property type="entry name" value="Argininosuccinate_lyase"/>
    <property type="match status" value="1"/>
</dbReference>
<dbReference type="FunFam" id="1.10.275.10:FF:000002">
    <property type="entry name" value="Argininosuccinate lyase"/>
    <property type="match status" value="1"/>
</dbReference>
<dbReference type="FunFam" id="1.10.40.30:FF:000001">
    <property type="entry name" value="Argininosuccinate lyase"/>
    <property type="match status" value="1"/>
</dbReference>
<dbReference type="FunFam" id="1.20.200.10:FF:000015">
    <property type="entry name" value="argininosuccinate lyase isoform X2"/>
    <property type="match status" value="1"/>
</dbReference>
<dbReference type="Gene3D" id="1.10.40.30">
    <property type="entry name" value="Fumarase/aspartase (C-terminal domain)"/>
    <property type="match status" value="1"/>
</dbReference>
<dbReference type="Gene3D" id="1.20.200.10">
    <property type="entry name" value="Fumarase/aspartase (Central domain)"/>
    <property type="match status" value="1"/>
</dbReference>
<dbReference type="Gene3D" id="1.10.275.10">
    <property type="entry name" value="Fumarase/aspartase (N-terminal domain)"/>
    <property type="match status" value="1"/>
</dbReference>
<dbReference type="HAMAP" id="MF_00006">
    <property type="entry name" value="Arg_succ_lyase"/>
    <property type="match status" value="1"/>
</dbReference>
<dbReference type="InterPro" id="IPR029419">
    <property type="entry name" value="Arg_succ_lyase_C"/>
</dbReference>
<dbReference type="InterPro" id="IPR009049">
    <property type="entry name" value="Argininosuccinate_lyase"/>
</dbReference>
<dbReference type="InterPro" id="IPR024083">
    <property type="entry name" value="Fumarase/histidase_N"/>
</dbReference>
<dbReference type="InterPro" id="IPR020557">
    <property type="entry name" value="Fumarate_lyase_CS"/>
</dbReference>
<dbReference type="InterPro" id="IPR000362">
    <property type="entry name" value="Fumarate_lyase_fam"/>
</dbReference>
<dbReference type="InterPro" id="IPR022761">
    <property type="entry name" value="Fumarate_lyase_N"/>
</dbReference>
<dbReference type="InterPro" id="IPR008948">
    <property type="entry name" value="L-Aspartase-like"/>
</dbReference>
<dbReference type="NCBIfam" id="TIGR00838">
    <property type="entry name" value="argH"/>
    <property type="match status" value="1"/>
</dbReference>
<dbReference type="PANTHER" id="PTHR43814">
    <property type="entry name" value="ARGININOSUCCINATE LYASE"/>
    <property type="match status" value="1"/>
</dbReference>
<dbReference type="PANTHER" id="PTHR43814:SF1">
    <property type="entry name" value="ARGININOSUCCINATE LYASE"/>
    <property type="match status" value="1"/>
</dbReference>
<dbReference type="Pfam" id="PF14698">
    <property type="entry name" value="ASL_C2"/>
    <property type="match status" value="1"/>
</dbReference>
<dbReference type="Pfam" id="PF00206">
    <property type="entry name" value="Lyase_1"/>
    <property type="match status" value="1"/>
</dbReference>
<dbReference type="PRINTS" id="PR00145">
    <property type="entry name" value="ARGSUCLYASE"/>
</dbReference>
<dbReference type="PRINTS" id="PR00149">
    <property type="entry name" value="FUMRATELYASE"/>
</dbReference>
<dbReference type="SUPFAM" id="SSF48557">
    <property type="entry name" value="L-aspartase-like"/>
    <property type="match status" value="1"/>
</dbReference>
<dbReference type="PROSITE" id="PS00163">
    <property type="entry name" value="FUMARATE_LYASES"/>
    <property type="match status" value="1"/>
</dbReference>
<keyword id="KW-0028">Amino-acid biosynthesis</keyword>
<keyword id="KW-0055">Arginine biosynthesis</keyword>
<keyword id="KW-0963">Cytoplasm</keyword>
<keyword id="KW-0456">Lyase</keyword>
<keyword id="KW-1185">Reference proteome</keyword>
<accession>A1VRW9</accession>
<comment type="catalytic activity">
    <reaction evidence="1">
        <text>2-(N(omega)-L-arginino)succinate = fumarate + L-arginine</text>
        <dbReference type="Rhea" id="RHEA:24020"/>
        <dbReference type="ChEBI" id="CHEBI:29806"/>
        <dbReference type="ChEBI" id="CHEBI:32682"/>
        <dbReference type="ChEBI" id="CHEBI:57472"/>
        <dbReference type="EC" id="4.3.2.1"/>
    </reaction>
</comment>
<comment type="pathway">
    <text evidence="1">Amino-acid biosynthesis; L-arginine biosynthesis; L-arginine from L-ornithine and carbamoyl phosphate: step 3/3.</text>
</comment>
<comment type="subcellular location">
    <subcellularLocation>
        <location evidence="1">Cytoplasm</location>
    </subcellularLocation>
</comment>
<comment type="similarity">
    <text evidence="1">Belongs to the lyase 1 family. Argininosuccinate lyase subfamily.</text>
</comment>
<evidence type="ECO:0000255" key="1">
    <source>
        <dbReference type="HAMAP-Rule" id="MF_00006"/>
    </source>
</evidence>
<gene>
    <name evidence="1" type="primary">argH</name>
    <name type="ordered locus">Pnap_3098</name>
</gene>
<name>ARLY_POLNA</name>
<sequence>MNQFDKKSQAWSALFSEPMSDLVKRYTSSVFFDKRLWQADIAGSLAHADMLAAQSIIAPADHAAIQYGMAQITREIEAGEFEWKLDLEDVHLNIEARLTQLVGDPGKRLHTGRSRNDQVATDVRLWLRGEIDLIGGLLTDLQKALVEIADKNVEVILPGFTHLQVAQPVSFGHHMLAYVEMFSRDAERMLEVRRRVNRLPLGAAALAGTSYPLDRERVATTLGMVDEQGQPQVCQNSLDAVSDRDFAIEFTAAASLAMVHISRFSEELILWMSQNFGFINIADRFTTGSSIMPQKKNPDVPELARGKTGRVVGHLMGLITLMKGQPLAYNKDNQEDKEPLFDTVDTLKDTLRIFAEMVGGITVKPEAMERAALRGYATATDLADYLTKKGLPFRDAHETVAHAVKAATTHQVDLSELPLAVLQEFNPSIEKDVYEVLSLRGSLNARNILGGTAPAQVRAQIARHRARLG</sequence>